<dbReference type="EC" id="4.2.1.59" evidence="1"/>
<dbReference type="EMBL" id="AE017340">
    <property type="protein sequence ID" value="AAV81674.1"/>
    <property type="molecule type" value="Genomic_DNA"/>
</dbReference>
<dbReference type="RefSeq" id="WP_011234085.1">
    <property type="nucleotide sequence ID" value="NC_006512.1"/>
</dbReference>
<dbReference type="SMR" id="Q5R0Z2"/>
<dbReference type="STRING" id="283942.IL0834"/>
<dbReference type="GeneID" id="41335990"/>
<dbReference type="KEGG" id="ilo:IL0834"/>
<dbReference type="eggNOG" id="COG0764">
    <property type="taxonomic scope" value="Bacteria"/>
</dbReference>
<dbReference type="HOGENOM" id="CLU_078912_1_0_6"/>
<dbReference type="OrthoDB" id="9772788at2"/>
<dbReference type="Proteomes" id="UP000001171">
    <property type="component" value="Chromosome"/>
</dbReference>
<dbReference type="GO" id="GO:0005737">
    <property type="term" value="C:cytoplasm"/>
    <property type="evidence" value="ECO:0007669"/>
    <property type="project" value="UniProtKB-SubCell"/>
</dbReference>
<dbReference type="GO" id="GO:0016020">
    <property type="term" value="C:membrane"/>
    <property type="evidence" value="ECO:0007669"/>
    <property type="project" value="GOC"/>
</dbReference>
<dbReference type="GO" id="GO:0019171">
    <property type="term" value="F:(3R)-hydroxyacyl-[acyl-carrier-protein] dehydratase activity"/>
    <property type="evidence" value="ECO:0007669"/>
    <property type="project" value="UniProtKB-EC"/>
</dbReference>
<dbReference type="GO" id="GO:0006633">
    <property type="term" value="P:fatty acid biosynthetic process"/>
    <property type="evidence" value="ECO:0007669"/>
    <property type="project" value="UniProtKB-UniRule"/>
</dbReference>
<dbReference type="GO" id="GO:0009245">
    <property type="term" value="P:lipid A biosynthetic process"/>
    <property type="evidence" value="ECO:0007669"/>
    <property type="project" value="UniProtKB-UniRule"/>
</dbReference>
<dbReference type="CDD" id="cd01288">
    <property type="entry name" value="FabZ"/>
    <property type="match status" value="1"/>
</dbReference>
<dbReference type="FunFam" id="3.10.129.10:FF:000001">
    <property type="entry name" value="3-hydroxyacyl-[acyl-carrier-protein] dehydratase FabZ"/>
    <property type="match status" value="1"/>
</dbReference>
<dbReference type="Gene3D" id="3.10.129.10">
    <property type="entry name" value="Hotdog Thioesterase"/>
    <property type="match status" value="1"/>
</dbReference>
<dbReference type="HAMAP" id="MF_00406">
    <property type="entry name" value="FabZ"/>
    <property type="match status" value="1"/>
</dbReference>
<dbReference type="InterPro" id="IPR013114">
    <property type="entry name" value="FabA_FabZ"/>
</dbReference>
<dbReference type="InterPro" id="IPR010084">
    <property type="entry name" value="FabZ"/>
</dbReference>
<dbReference type="InterPro" id="IPR029069">
    <property type="entry name" value="HotDog_dom_sf"/>
</dbReference>
<dbReference type="NCBIfam" id="TIGR01750">
    <property type="entry name" value="fabZ"/>
    <property type="match status" value="1"/>
</dbReference>
<dbReference type="NCBIfam" id="NF000582">
    <property type="entry name" value="PRK00006.1"/>
    <property type="match status" value="1"/>
</dbReference>
<dbReference type="PANTHER" id="PTHR30272">
    <property type="entry name" value="3-HYDROXYACYL-[ACYL-CARRIER-PROTEIN] DEHYDRATASE"/>
    <property type="match status" value="1"/>
</dbReference>
<dbReference type="PANTHER" id="PTHR30272:SF1">
    <property type="entry name" value="3-HYDROXYACYL-[ACYL-CARRIER-PROTEIN] DEHYDRATASE"/>
    <property type="match status" value="1"/>
</dbReference>
<dbReference type="Pfam" id="PF07977">
    <property type="entry name" value="FabA"/>
    <property type="match status" value="1"/>
</dbReference>
<dbReference type="SUPFAM" id="SSF54637">
    <property type="entry name" value="Thioesterase/thiol ester dehydrase-isomerase"/>
    <property type="match status" value="1"/>
</dbReference>
<reference key="1">
    <citation type="journal article" date="2004" name="Proc. Natl. Acad. Sci. U.S.A.">
        <title>Genome sequence of the deep-sea gamma-proteobacterium Idiomarina loihiensis reveals amino acid fermentation as a source of carbon and energy.</title>
        <authorList>
            <person name="Hou S."/>
            <person name="Saw J.H."/>
            <person name="Lee K.S."/>
            <person name="Freitas T.A."/>
            <person name="Belisle C."/>
            <person name="Kawarabayasi Y."/>
            <person name="Donachie S.P."/>
            <person name="Pikina A."/>
            <person name="Galperin M.Y."/>
            <person name="Koonin E.V."/>
            <person name="Makarova K.S."/>
            <person name="Omelchenko M.V."/>
            <person name="Sorokin A."/>
            <person name="Wolf Y.I."/>
            <person name="Li Q.X."/>
            <person name="Keum Y.S."/>
            <person name="Campbell S."/>
            <person name="Denery J."/>
            <person name="Aizawa S."/>
            <person name="Shibata S."/>
            <person name="Malahoff A."/>
            <person name="Alam M."/>
        </authorList>
    </citation>
    <scope>NUCLEOTIDE SEQUENCE [LARGE SCALE GENOMIC DNA]</scope>
    <source>
        <strain>ATCC BAA-735 / DSM 15497 / L2-TR</strain>
    </source>
</reference>
<organism>
    <name type="scientific">Idiomarina loihiensis (strain ATCC BAA-735 / DSM 15497 / L2-TR)</name>
    <dbReference type="NCBI Taxonomy" id="283942"/>
    <lineage>
        <taxon>Bacteria</taxon>
        <taxon>Pseudomonadati</taxon>
        <taxon>Pseudomonadota</taxon>
        <taxon>Gammaproteobacteria</taxon>
        <taxon>Alteromonadales</taxon>
        <taxon>Idiomarinaceae</taxon>
        <taxon>Idiomarina</taxon>
    </lineage>
</organism>
<proteinExistence type="inferred from homology"/>
<name>FABZ_IDILO</name>
<comment type="function">
    <text evidence="1">Involved in unsaturated fatty acids biosynthesis. Catalyzes the dehydration of short chain beta-hydroxyacyl-ACPs and long chain saturated and unsaturated beta-hydroxyacyl-ACPs.</text>
</comment>
<comment type="catalytic activity">
    <reaction evidence="1">
        <text>a (3R)-hydroxyacyl-[ACP] = a (2E)-enoyl-[ACP] + H2O</text>
        <dbReference type="Rhea" id="RHEA:13097"/>
        <dbReference type="Rhea" id="RHEA-COMP:9925"/>
        <dbReference type="Rhea" id="RHEA-COMP:9945"/>
        <dbReference type="ChEBI" id="CHEBI:15377"/>
        <dbReference type="ChEBI" id="CHEBI:78784"/>
        <dbReference type="ChEBI" id="CHEBI:78827"/>
        <dbReference type="EC" id="4.2.1.59"/>
    </reaction>
</comment>
<comment type="subcellular location">
    <subcellularLocation>
        <location evidence="1">Cytoplasm</location>
    </subcellularLocation>
</comment>
<comment type="similarity">
    <text evidence="1">Belongs to the thioester dehydratase family. FabZ subfamily.</text>
</comment>
<gene>
    <name evidence="1" type="primary">fabZ</name>
    <name type="ordered locus">IL0834</name>
</gene>
<feature type="chain" id="PRO_0000091690" description="3-hydroxyacyl-[acyl-carrier-protein] dehydratase FabZ">
    <location>
        <begin position="1"/>
        <end position="151"/>
    </location>
</feature>
<feature type="active site" evidence="1">
    <location>
        <position position="54"/>
    </location>
</feature>
<protein>
    <recommendedName>
        <fullName evidence="1">3-hydroxyacyl-[acyl-carrier-protein] dehydratase FabZ</fullName>
        <ecNumber evidence="1">4.2.1.59</ecNumber>
    </recommendedName>
    <alternativeName>
        <fullName evidence="1">(3R)-hydroxymyristoyl-[acyl-carrier-protein] dehydratase</fullName>
        <shortName evidence="1">(3R)-hydroxymyristoyl-ACP dehydrase</shortName>
    </alternativeName>
    <alternativeName>
        <fullName evidence="1">Beta-hydroxyacyl-ACP dehydratase</fullName>
    </alternativeName>
</protein>
<keyword id="KW-0963">Cytoplasm</keyword>
<keyword id="KW-0441">Lipid A biosynthesis</keyword>
<keyword id="KW-0444">Lipid biosynthesis</keyword>
<keyword id="KW-0443">Lipid metabolism</keyword>
<keyword id="KW-0456">Lyase</keyword>
<keyword id="KW-1185">Reference proteome</keyword>
<sequence length="151" mass="16991">MKITESGFDIQGVLDLLPHRYPFLLIDRVIETNSKDSLHAIKNVTFNEPMFNGHFPAKPIFPGVLLLEAIAQACGLLGFKITESKKNANDLYLFAGIDNARFKRQVIPGDTVDFFVTFEKERRGIWKFTGRAEVDGDVACTAEIICARREV</sequence>
<evidence type="ECO:0000255" key="1">
    <source>
        <dbReference type="HAMAP-Rule" id="MF_00406"/>
    </source>
</evidence>
<accession>Q5R0Z2</accession>